<feature type="initiator methionine" description="Removed" evidence="1">
    <location>
        <position position="1"/>
    </location>
</feature>
<feature type="chain" id="PRO_0000111904" description="Protein-L-isoaspartate O-methyltransferase">
    <location>
        <begin position="2"/>
        <end position="208"/>
    </location>
</feature>
<feature type="active site" evidence="1">
    <location>
        <position position="59"/>
    </location>
</feature>
<feature type="sequence conflict" description="In Ref. 2; AAP18081." evidence="2" ref="2">
    <original>T</original>
    <variation>I</variation>
    <location>
        <position position="82"/>
    </location>
</feature>
<comment type="function">
    <text evidence="1">Catalyzes the methyl esterification of L-isoaspartyl residues in peptides and proteins that result from spontaneous decomposition of normal L-aspartyl and L-asparaginyl residues. It plays a role in the repair and/or degradation of damaged proteins (By similarity).</text>
</comment>
<comment type="catalytic activity">
    <reaction>
        <text>[protein]-L-isoaspartate + S-adenosyl-L-methionine = [protein]-L-isoaspartate alpha-methyl ester + S-adenosyl-L-homocysteine</text>
        <dbReference type="Rhea" id="RHEA:12705"/>
        <dbReference type="Rhea" id="RHEA-COMP:12143"/>
        <dbReference type="Rhea" id="RHEA-COMP:12144"/>
        <dbReference type="ChEBI" id="CHEBI:57856"/>
        <dbReference type="ChEBI" id="CHEBI:59789"/>
        <dbReference type="ChEBI" id="CHEBI:90596"/>
        <dbReference type="ChEBI" id="CHEBI:90598"/>
        <dbReference type="EC" id="2.1.1.77"/>
    </reaction>
</comment>
<comment type="subunit">
    <text evidence="1">Monomer.</text>
</comment>
<comment type="subcellular location">
    <subcellularLocation>
        <location evidence="1">Cytoplasm</location>
    </subcellularLocation>
</comment>
<comment type="similarity">
    <text evidence="2">Belongs to the methyltransferase superfamily. L-isoaspartyl/D-aspartyl protein methyltransferase family.</text>
</comment>
<dbReference type="EC" id="2.1.1.77"/>
<dbReference type="EMBL" id="AE005674">
    <property type="protein sequence ID" value="AAN44255.1"/>
    <property type="molecule type" value="Genomic_DNA"/>
</dbReference>
<dbReference type="EMBL" id="AE014073">
    <property type="protein sequence ID" value="AAP18081.1"/>
    <property type="molecule type" value="Genomic_DNA"/>
</dbReference>
<dbReference type="RefSeq" id="NP_708548.1">
    <property type="nucleotide sequence ID" value="NC_004337.2"/>
</dbReference>
<dbReference type="RefSeq" id="WP_000254711.1">
    <property type="nucleotide sequence ID" value="NZ_CP123365.1"/>
</dbReference>
<dbReference type="SMR" id="Q83JY3"/>
<dbReference type="STRING" id="198214.SF2766"/>
<dbReference type="PaxDb" id="198214-SF2766"/>
<dbReference type="GeneID" id="1025767"/>
<dbReference type="KEGG" id="sfl:SF2766"/>
<dbReference type="KEGG" id="sfx:S2959"/>
<dbReference type="PATRIC" id="fig|198214.7.peg.3293"/>
<dbReference type="HOGENOM" id="CLU_055432_2_0_6"/>
<dbReference type="Proteomes" id="UP000001006">
    <property type="component" value="Chromosome"/>
</dbReference>
<dbReference type="Proteomes" id="UP000002673">
    <property type="component" value="Chromosome"/>
</dbReference>
<dbReference type="GO" id="GO:0005737">
    <property type="term" value="C:cytoplasm"/>
    <property type="evidence" value="ECO:0007669"/>
    <property type="project" value="UniProtKB-SubCell"/>
</dbReference>
<dbReference type="GO" id="GO:0004719">
    <property type="term" value="F:protein-L-isoaspartate (D-aspartate) O-methyltransferase activity"/>
    <property type="evidence" value="ECO:0007669"/>
    <property type="project" value="UniProtKB-UniRule"/>
</dbReference>
<dbReference type="GO" id="GO:0032259">
    <property type="term" value="P:methylation"/>
    <property type="evidence" value="ECO:0007669"/>
    <property type="project" value="UniProtKB-KW"/>
</dbReference>
<dbReference type="GO" id="GO:0036211">
    <property type="term" value="P:protein modification process"/>
    <property type="evidence" value="ECO:0007669"/>
    <property type="project" value="UniProtKB-UniRule"/>
</dbReference>
<dbReference type="GO" id="GO:0030091">
    <property type="term" value="P:protein repair"/>
    <property type="evidence" value="ECO:0007669"/>
    <property type="project" value="UniProtKB-UniRule"/>
</dbReference>
<dbReference type="CDD" id="cd02440">
    <property type="entry name" value="AdoMet_MTases"/>
    <property type="match status" value="1"/>
</dbReference>
<dbReference type="FunFam" id="3.40.50.150:FF:000010">
    <property type="entry name" value="Protein-L-isoaspartate O-methyltransferase"/>
    <property type="match status" value="1"/>
</dbReference>
<dbReference type="Gene3D" id="3.40.50.150">
    <property type="entry name" value="Vaccinia Virus protein VP39"/>
    <property type="match status" value="1"/>
</dbReference>
<dbReference type="HAMAP" id="MF_00090">
    <property type="entry name" value="PIMT"/>
    <property type="match status" value="1"/>
</dbReference>
<dbReference type="InterPro" id="IPR000682">
    <property type="entry name" value="PCMT"/>
</dbReference>
<dbReference type="InterPro" id="IPR029063">
    <property type="entry name" value="SAM-dependent_MTases_sf"/>
</dbReference>
<dbReference type="NCBIfam" id="TIGR00080">
    <property type="entry name" value="pimt"/>
    <property type="match status" value="1"/>
</dbReference>
<dbReference type="NCBIfam" id="NF001453">
    <property type="entry name" value="PRK00312.1"/>
    <property type="match status" value="1"/>
</dbReference>
<dbReference type="PANTHER" id="PTHR11579">
    <property type="entry name" value="PROTEIN-L-ISOASPARTATE O-METHYLTRANSFERASE"/>
    <property type="match status" value="1"/>
</dbReference>
<dbReference type="PANTHER" id="PTHR11579:SF0">
    <property type="entry name" value="PROTEIN-L-ISOASPARTATE(D-ASPARTATE) O-METHYLTRANSFERASE"/>
    <property type="match status" value="1"/>
</dbReference>
<dbReference type="Pfam" id="PF01135">
    <property type="entry name" value="PCMT"/>
    <property type="match status" value="1"/>
</dbReference>
<dbReference type="SUPFAM" id="SSF53335">
    <property type="entry name" value="S-adenosyl-L-methionine-dependent methyltransferases"/>
    <property type="match status" value="1"/>
</dbReference>
<dbReference type="PROSITE" id="PS01279">
    <property type="entry name" value="PCMT"/>
    <property type="match status" value="1"/>
</dbReference>
<sequence length="208" mass="23246">MVSRRVQALLDQLRAQGIQDEQVLNALAAVPREKFVDEAFEQKAWDNIALPIGQGQTISQPYMVARMTELLELTPQSRVLETGTGSGYQTAILAHLVQHVCSVERIKGLQWQARRRLKNLDLHNVSTRHGDGWQGWQARAPFDAIIVTAAPPEIPTALMTQLDEGGILVLPVGEEHQYLKRVRRRGGEFIIDTVEAVRFVPLVKGELA</sequence>
<organism>
    <name type="scientific">Shigella flexneri</name>
    <dbReference type="NCBI Taxonomy" id="623"/>
    <lineage>
        <taxon>Bacteria</taxon>
        <taxon>Pseudomonadati</taxon>
        <taxon>Pseudomonadota</taxon>
        <taxon>Gammaproteobacteria</taxon>
        <taxon>Enterobacterales</taxon>
        <taxon>Enterobacteriaceae</taxon>
        <taxon>Shigella</taxon>
    </lineage>
</organism>
<gene>
    <name type="primary">pcm</name>
    <name type="ordered locus">SF2766</name>
    <name type="ordered locus">S2959</name>
</gene>
<evidence type="ECO:0000250" key="1"/>
<evidence type="ECO:0000305" key="2"/>
<name>PIMT_SHIFL</name>
<proteinExistence type="inferred from homology"/>
<reference key="1">
    <citation type="journal article" date="2002" name="Nucleic Acids Res.">
        <title>Genome sequence of Shigella flexneri 2a: insights into pathogenicity through comparison with genomes of Escherichia coli K12 and O157.</title>
        <authorList>
            <person name="Jin Q."/>
            <person name="Yuan Z."/>
            <person name="Xu J."/>
            <person name="Wang Y."/>
            <person name="Shen Y."/>
            <person name="Lu W."/>
            <person name="Wang J."/>
            <person name="Liu H."/>
            <person name="Yang J."/>
            <person name="Yang F."/>
            <person name="Zhang X."/>
            <person name="Zhang J."/>
            <person name="Yang G."/>
            <person name="Wu H."/>
            <person name="Qu D."/>
            <person name="Dong J."/>
            <person name="Sun L."/>
            <person name="Xue Y."/>
            <person name="Zhao A."/>
            <person name="Gao Y."/>
            <person name="Zhu J."/>
            <person name="Kan B."/>
            <person name="Ding K."/>
            <person name="Chen S."/>
            <person name="Cheng H."/>
            <person name="Yao Z."/>
            <person name="He B."/>
            <person name="Chen R."/>
            <person name="Ma D."/>
            <person name="Qiang B."/>
            <person name="Wen Y."/>
            <person name="Hou Y."/>
            <person name="Yu J."/>
        </authorList>
    </citation>
    <scope>NUCLEOTIDE SEQUENCE [LARGE SCALE GENOMIC DNA]</scope>
    <source>
        <strain>301 / Serotype 2a</strain>
    </source>
</reference>
<reference key="2">
    <citation type="journal article" date="2003" name="Infect. Immun.">
        <title>Complete genome sequence and comparative genomics of Shigella flexneri serotype 2a strain 2457T.</title>
        <authorList>
            <person name="Wei J."/>
            <person name="Goldberg M.B."/>
            <person name="Burland V."/>
            <person name="Venkatesan M.M."/>
            <person name="Deng W."/>
            <person name="Fournier G."/>
            <person name="Mayhew G.F."/>
            <person name="Plunkett G. III"/>
            <person name="Rose D.J."/>
            <person name="Darling A."/>
            <person name="Mau B."/>
            <person name="Perna N.T."/>
            <person name="Payne S.M."/>
            <person name="Runyen-Janecky L.J."/>
            <person name="Zhou S."/>
            <person name="Schwartz D.C."/>
            <person name="Blattner F.R."/>
        </authorList>
    </citation>
    <scope>NUCLEOTIDE SEQUENCE [LARGE SCALE GENOMIC DNA]</scope>
    <source>
        <strain>ATCC 700930 / 2457T / Serotype 2a</strain>
    </source>
</reference>
<protein>
    <recommendedName>
        <fullName>Protein-L-isoaspartate O-methyltransferase</fullName>
        <ecNumber>2.1.1.77</ecNumber>
    </recommendedName>
    <alternativeName>
        <fullName>L-isoaspartyl protein carboxyl methyltransferase</fullName>
    </alternativeName>
    <alternativeName>
        <fullName>Protein L-isoaspartyl methyltransferase</fullName>
    </alternativeName>
    <alternativeName>
        <fullName>Protein-beta-aspartate methyltransferase</fullName>
        <shortName>PIMT</shortName>
    </alternativeName>
</protein>
<accession>Q83JY3</accession>
<keyword id="KW-0963">Cytoplasm</keyword>
<keyword id="KW-0489">Methyltransferase</keyword>
<keyword id="KW-1185">Reference proteome</keyword>
<keyword id="KW-0949">S-adenosyl-L-methionine</keyword>
<keyword id="KW-0808">Transferase</keyword>